<proteinExistence type="inferred from homology"/>
<sequence>MSLTEEIKKRRTFAIISHPDAGKTTITEQLLYFGGEIREAGTVKGKKSGTFAKSDWMDIEKQRGISVTSSVMQFDYAGKRVNILDTPGHEDFSEDTYRTLMAVDAAVMVVDSAKGIEAQTKKLFEVVKHRNIPVFTFINKLDRDGREPLELLEELEEVLGIASYPMNWPIGMGRAFEGLYDLHNKRLELYKGDERFASIEDGDQLFANNPFYEQVKEDIELLQEAGNDFSEQAILDGDLTPVFFGSALTNFGVQTFLDTFLEFAPEPHGHKTTEGNVVDPLAKDFSGFVFKIQANMDPKHRDRIAFVRIVSGEFERGMGVNLTRTGKGAKLSNVTQFMAESRENVTNAVAGDIIGVYDTGTYQVGDTLTVGKNKFEFEPLPTFTPEIFMKVSPKNVMKQKSFHKGIEQLVQEGAIQLYKNYQTGEYMLGAVGQLQFEVFKHRMEGEYNAEVVMTPMGKKTVRWISEDDLDQRMSSSRNILAKDRFDQPVFLFENDFALRWFADKYPDVTLEEKM</sequence>
<feature type="chain" id="PRO_0000210975" description="Peptide chain release factor 3">
    <location>
        <begin position="1"/>
        <end position="514"/>
    </location>
</feature>
<feature type="domain" description="tr-type G">
    <location>
        <begin position="8"/>
        <end position="268"/>
    </location>
</feature>
<feature type="binding site" evidence="1">
    <location>
        <begin position="17"/>
        <end position="24"/>
    </location>
    <ligand>
        <name>GTP</name>
        <dbReference type="ChEBI" id="CHEBI:37565"/>
    </ligand>
</feature>
<feature type="binding site" evidence="1">
    <location>
        <begin position="85"/>
        <end position="89"/>
    </location>
    <ligand>
        <name>GTP</name>
        <dbReference type="ChEBI" id="CHEBI:37565"/>
    </ligand>
</feature>
<feature type="binding site" evidence="1">
    <location>
        <begin position="139"/>
        <end position="142"/>
    </location>
    <ligand>
        <name>GTP</name>
        <dbReference type="ChEBI" id="CHEBI:37565"/>
    </ligand>
</feature>
<accession>P0DD96</accession>
<accession>P66022</accession>
<accession>Q99Z37</accession>
<protein>
    <recommendedName>
        <fullName evidence="1">Peptide chain release factor 3</fullName>
        <shortName evidence="1">RF-3</shortName>
    </recommendedName>
</protein>
<evidence type="ECO:0000255" key="1">
    <source>
        <dbReference type="HAMAP-Rule" id="MF_00072"/>
    </source>
</evidence>
<name>RF3_STRP3</name>
<organism>
    <name type="scientific">Streptococcus pyogenes serotype M3 (strain ATCC BAA-595 / MGAS315)</name>
    <dbReference type="NCBI Taxonomy" id="198466"/>
    <lineage>
        <taxon>Bacteria</taxon>
        <taxon>Bacillati</taxon>
        <taxon>Bacillota</taxon>
        <taxon>Bacilli</taxon>
        <taxon>Lactobacillales</taxon>
        <taxon>Streptococcaceae</taxon>
        <taxon>Streptococcus</taxon>
    </lineage>
</organism>
<reference key="1">
    <citation type="journal article" date="2002" name="Proc. Natl. Acad. Sci. U.S.A.">
        <title>Genome sequence of a serotype M3 strain of group A Streptococcus: phage-encoded toxins, the high-virulence phenotype, and clone emergence.</title>
        <authorList>
            <person name="Beres S.B."/>
            <person name="Sylva G.L."/>
            <person name="Barbian K.D."/>
            <person name="Lei B."/>
            <person name="Hoff J.S."/>
            <person name="Mammarella N.D."/>
            <person name="Liu M.-Y."/>
            <person name="Smoot J.C."/>
            <person name="Porcella S.F."/>
            <person name="Parkins L.D."/>
            <person name="Campbell D.S."/>
            <person name="Smith T.M."/>
            <person name="McCormick J.K."/>
            <person name="Leung D.Y.M."/>
            <person name="Schlievert P.M."/>
            <person name="Musser J.M."/>
        </authorList>
    </citation>
    <scope>NUCLEOTIDE SEQUENCE [LARGE SCALE GENOMIC DNA]</scope>
    <source>
        <strain>ATCC BAA-595 / MGAS315</strain>
    </source>
</reference>
<keyword id="KW-0963">Cytoplasm</keyword>
<keyword id="KW-0342">GTP-binding</keyword>
<keyword id="KW-0547">Nucleotide-binding</keyword>
<keyword id="KW-0648">Protein biosynthesis</keyword>
<dbReference type="EMBL" id="AE014074">
    <property type="protein sequence ID" value="AAM79687.1"/>
    <property type="molecule type" value="Genomic_DNA"/>
</dbReference>
<dbReference type="RefSeq" id="WP_002989155.1">
    <property type="nucleotide sequence ID" value="NC_004070.1"/>
</dbReference>
<dbReference type="SMR" id="P0DD96"/>
<dbReference type="KEGG" id="spg:SpyM3_1080"/>
<dbReference type="HOGENOM" id="CLU_002794_2_1_9"/>
<dbReference type="Proteomes" id="UP000000564">
    <property type="component" value="Chromosome"/>
</dbReference>
<dbReference type="GO" id="GO:0005829">
    <property type="term" value="C:cytosol"/>
    <property type="evidence" value="ECO:0007669"/>
    <property type="project" value="TreeGrafter"/>
</dbReference>
<dbReference type="GO" id="GO:0005525">
    <property type="term" value="F:GTP binding"/>
    <property type="evidence" value="ECO:0007669"/>
    <property type="project" value="UniProtKB-UniRule"/>
</dbReference>
<dbReference type="GO" id="GO:0003924">
    <property type="term" value="F:GTPase activity"/>
    <property type="evidence" value="ECO:0007669"/>
    <property type="project" value="InterPro"/>
</dbReference>
<dbReference type="GO" id="GO:0016150">
    <property type="term" value="F:translation release factor activity, codon nonspecific"/>
    <property type="evidence" value="ECO:0007669"/>
    <property type="project" value="TreeGrafter"/>
</dbReference>
<dbReference type="GO" id="GO:0016149">
    <property type="term" value="F:translation release factor activity, codon specific"/>
    <property type="evidence" value="ECO:0007669"/>
    <property type="project" value="UniProtKB-UniRule"/>
</dbReference>
<dbReference type="GO" id="GO:0006449">
    <property type="term" value="P:regulation of translational termination"/>
    <property type="evidence" value="ECO:0007669"/>
    <property type="project" value="UniProtKB-UniRule"/>
</dbReference>
<dbReference type="CDD" id="cd04169">
    <property type="entry name" value="RF3"/>
    <property type="match status" value="1"/>
</dbReference>
<dbReference type="CDD" id="cd16259">
    <property type="entry name" value="RF3_III"/>
    <property type="match status" value="1"/>
</dbReference>
<dbReference type="FunFam" id="2.40.30.10:FF:000040">
    <property type="entry name" value="Peptide chain release factor 3"/>
    <property type="match status" value="1"/>
</dbReference>
<dbReference type="FunFam" id="3.30.70.3280:FF:000001">
    <property type="entry name" value="Peptide chain release factor 3"/>
    <property type="match status" value="1"/>
</dbReference>
<dbReference type="FunFam" id="3.40.50.300:FF:000542">
    <property type="entry name" value="Peptide chain release factor 3"/>
    <property type="match status" value="1"/>
</dbReference>
<dbReference type="Gene3D" id="3.40.50.300">
    <property type="entry name" value="P-loop containing nucleotide triphosphate hydrolases"/>
    <property type="match status" value="1"/>
</dbReference>
<dbReference type="Gene3D" id="3.30.70.3280">
    <property type="entry name" value="Peptide chain release factor 3, domain III"/>
    <property type="match status" value="1"/>
</dbReference>
<dbReference type="Gene3D" id="2.40.30.10">
    <property type="entry name" value="Translation factors"/>
    <property type="match status" value="1"/>
</dbReference>
<dbReference type="HAMAP" id="MF_00072">
    <property type="entry name" value="Rel_fac_3"/>
    <property type="match status" value="1"/>
</dbReference>
<dbReference type="InterPro" id="IPR053905">
    <property type="entry name" value="EF-G-like_DII"/>
</dbReference>
<dbReference type="InterPro" id="IPR035647">
    <property type="entry name" value="EFG_III/V"/>
</dbReference>
<dbReference type="InterPro" id="IPR031157">
    <property type="entry name" value="G_TR_CS"/>
</dbReference>
<dbReference type="InterPro" id="IPR027417">
    <property type="entry name" value="P-loop_NTPase"/>
</dbReference>
<dbReference type="InterPro" id="IPR004548">
    <property type="entry name" value="PrfC"/>
</dbReference>
<dbReference type="InterPro" id="IPR032090">
    <property type="entry name" value="RF3_C"/>
</dbReference>
<dbReference type="InterPro" id="IPR038467">
    <property type="entry name" value="RF3_dom_3_sf"/>
</dbReference>
<dbReference type="InterPro" id="IPR041732">
    <property type="entry name" value="RF3_GTP-bd"/>
</dbReference>
<dbReference type="InterPro" id="IPR005225">
    <property type="entry name" value="Small_GTP-bd"/>
</dbReference>
<dbReference type="InterPro" id="IPR000795">
    <property type="entry name" value="T_Tr_GTP-bd_dom"/>
</dbReference>
<dbReference type="InterPro" id="IPR009000">
    <property type="entry name" value="Transl_B-barrel_sf"/>
</dbReference>
<dbReference type="NCBIfam" id="TIGR00503">
    <property type="entry name" value="prfC"/>
    <property type="match status" value="1"/>
</dbReference>
<dbReference type="NCBIfam" id="NF001964">
    <property type="entry name" value="PRK00741.1"/>
    <property type="match status" value="1"/>
</dbReference>
<dbReference type="NCBIfam" id="TIGR00231">
    <property type="entry name" value="small_GTP"/>
    <property type="match status" value="1"/>
</dbReference>
<dbReference type="PANTHER" id="PTHR43556">
    <property type="entry name" value="PEPTIDE CHAIN RELEASE FACTOR RF3"/>
    <property type="match status" value="1"/>
</dbReference>
<dbReference type="PANTHER" id="PTHR43556:SF2">
    <property type="entry name" value="PEPTIDE CHAIN RELEASE FACTOR RF3"/>
    <property type="match status" value="1"/>
</dbReference>
<dbReference type="Pfam" id="PF22042">
    <property type="entry name" value="EF-G_D2"/>
    <property type="match status" value="1"/>
</dbReference>
<dbReference type="Pfam" id="PF00009">
    <property type="entry name" value="GTP_EFTU"/>
    <property type="match status" value="1"/>
</dbReference>
<dbReference type="Pfam" id="PF16658">
    <property type="entry name" value="RF3_C"/>
    <property type="match status" value="1"/>
</dbReference>
<dbReference type="PRINTS" id="PR00315">
    <property type="entry name" value="ELONGATNFCT"/>
</dbReference>
<dbReference type="PRINTS" id="PR01037">
    <property type="entry name" value="TCRTETOQM"/>
</dbReference>
<dbReference type="SUPFAM" id="SSF54980">
    <property type="entry name" value="EF-G C-terminal domain-like"/>
    <property type="match status" value="1"/>
</dbReference>
<dbReference type="SUPFAM" id="SSF52540">
    <property type="entry name" value="P-loop containing nucleoside triphosphate hydrolases"/>
    <property type="match status" value="1"/>
</dbReference>
<dbReference type="SUPFAM" id="SSF50447">
    <property type="entry name" value="Translation proteins"/>
    <property type="match status" value="1"/>
</dbReference>
<dbReference type="PROSITE" id="PS00301">
    <property type="entry name" value="G_TR_1"/>
    <property type="match status" value="1"/>
</dbReference>
<dbReference type="PROSITE" id="PS51722">
    <property type="entry name" value="G_TR_2"/>
    <property type="match status" value="1"/>
</dbReference>
<gene>
    <name evidence="1" type="primary">prfC</name>
    <name type="ordered locus">SpyM3_1080</name>
</gene>
<comment type="function">
    <text evidence="1">Increases the formation of ribosomal termination complexes and stimulates activities of RF-1 and RF-2. It binds guanine nucleotides and has strong preference for UGA stop codons. It may interact directly with the ribosome. The stimulation of RF-1 and RF-2 is significantly reduced by GTP and GDP, but not by GMP.</text>
</comment>
<comment type="subcellular location">
    <subcellularLocation>
        <location evidence="1">Cytoplasm</location>
    </subcellularLocation>
</comment>
<comment type="similarity">
    <text evidence="1">Belongs to the TRAFAC class translation factor GTPase superfamily. Classic translation factor GTPase family. PrfC subfamily.</text>
</comment>